<sequence length="694" mass="75432">MTRTALVTTALPYANGPLHLGHLVGYIQADIWVRARRLRGDKTWFVCADDTHGTPIMLAAEKAGVTPEAFIASIQASHERDFAAFGVTFDHYDSTNSPVNRELTEAFYTKLEAAGHISRRSVAQFYDPAKGMFLPDRYIKGICPNCGSADQYGDNCEVCGATYAPTELKEPRSVISGATPELRDSEHFFFEVGQFDGFLHEWLAGDVALPGVKAKLKEWLDAEGGLRAWDISRDAPYFGFQMPGQPGKYFYVWLDAPIGYLCSFKTLCAQMGEDFAAHLVDGTQTELHHFIGKDIVNFHGLFWPAVLHGTGHRAPTRLHVNGYLTVDGAKMSKSRGTFVMARTFLDVGLEPEALRYYFAAKSSGGVDDLDLNLGDFIARVNADLVGKFVNLASRCAGFIGKRFDGKLAEALPDAAQYDRFVAALAPIREAYERNDAASAIRQTMALADEANKYIDDTKPWVIAKQDSADAQLQSVCTQGLNLFRVLVAALKPILPRTCAEAEAFLSAPMTSWEDVIRPLTSHTIQPYTALFTRIDPKLIDAMTDASKDTLAAPAAPATTSKAAPAKPDTKPAAAANPQSPISNPSFIGMDDFAKLDLRIGKVLVCECVEGSDKLLRFELDAGELGKRQIFSGIRASYGEPEALVGRSVVFIANLAPRKMRFGISDGMILSAGFDGGALALLDADSGAQPGMPVR</sequence>
<comment type="function">
    <text evidence="1">Is required not only for elongation of protein synthesis but also for the initiation of all mRNA translation through initiator tRNA(fMet) aminoacylation.</text>
</comment>
<comment type="catalytic activity">
    <reaction evidence="1">
        <text>tRNA(Met) + L-methionine + ATP = L-methionyl-tRNA(Met) + AMP + diphosphate</text>
        <dbReference type="Rhea" id="RHEA:13481"/>
        <dbReference type="Rhea" id="RHEA-COMP:9667"/>
        <dbReference type="Rhea" id="RHEA-COMP:9698"/>
        <dbReference type="ChEBI" id="CHEBI:30616"/>
        <dbReference type="ChEBI" id="CHEBI:33019"/>
        <dbReference type="ChEBI" id="CHEBI:57844"/>
        <dbReference type="ChEBI" id="CHEBI:78442"/>
        <dbReference type="ChEBI" id="CHEBI:78530"/>
        <dbReference type="ChEBI" id="CHEBI:456215"/>
        <dbReference type="EC" id="6.1.1.10"/>
    </reaction>
</comment>
<comment type="cofactor">
    <cofactor evidence="1">
        <name>Zn(2+)</name>
        <dbReference type="ChEBI" id="CHEBI:29105"/>
    </cofactor>
    <text evidence="1">Binds 1 zinc ion per subunit.</text>
</comment>
<comment type="subunit">
    <text evidence="1">Homodimer.</text>
</comment>
<comment type="subcellular location">
    <subcellularLocation>
        <location evidence="1">Cytoplasm</location>
    </subcellularLocation>
</comment>
<comment type="similarity">
    <text evidence="1">Belongs to the class-I aminoacyl-tRNA synthetase family. MetG type 1 subfamily.</text>
</comment>
<feature type="chain" id="PRO_0000331929" description="Methionine--tRNA ligase">
    <location>
        <begin position="1"/>
        <end position="694"/>
    </location>
</feature>
<feature type="domain" description="tRNA-binding" evidence="1">
    <location>
        <begin position="591"/>
        <end position="694"/>
    </location>
</feature>
<feature type="region of interest" description="Disordered" evidence="2">
    <location>
        <begin position="550"/>
        <end position="580"/>
    </location>
</feature>
<feature type="short sequence motif" description="'HIGH' region">
    <location>
        <begin position="12"/>
        <end position="22"/>
    </location>
</feature>
<feature type="short sequence motif" description="'KMSKS' region">
    <location>
        <begin position="330"/>
        <end position="334"/>
    </location>
</feature>
<feature type="compositionally biased region" description="Low complexity" evidence="2">
    <location>
        <begin position="550"/>
        <end position="575"/>
    </location>
</feature>
<feature type="binding site" evidence="1">
    <location>
        <position position="143"/>
    </location>
    <ligand>
        <name>Zn(2+)</name>
        <dbReference type="ChEBI" id="CHEBI:29105"/>
    </ligand>
</feature>
<feature type="binding site" evidence="1">
    <location>
        <position position="146"/>
    </location>
    <ligand>
        <name>Zn(2+)</name>
        <dbReference type="ChEBI" id="CHEBI:29105"/>
    </ligand>
</feature>
<feature type="binding site" evidence="1">
    <location>
        <position position="156"/>
    </location>
    <ligand>
        <name>Zn(2+)</name>
        <dbReference type="ChEBI" id="CHEBI:29105"/>
    </ligand>
</feature>
<feature type="binding site" evidence="1">
    <location>
        <position position="159"/>
    </location>
    <ligand>
        <name>Zn(2+)</name>
        <dbReference type="ChEBI" id="CHEBI:29105"/>
    </ligand>
</feature>
<feature type="binding site" evidence="1">
    <location>
        <position position="333"/>
    </location>
    <ligand>
        <name>ATP</name>
        <dbReference type="ChEBI" id="CHEBI:30616"/>
    </ligand>
</feature>
<name>SYM_XANOM</name>
<keyword id="KW-0030">Aminoacyl-tRNA synthetase</keyword>
<keyword id="KW-0067">ATP-binding</keyword>
<keyword id="KW-0963">Cytoplasm</keyword>
<keyword id="KW-0436">Ligase</keyword>
<keyword id="KW-0479">Metal-binding</keyword>
<keyword id="KW-0547">Nucleotide-binding</keyword>
<keyword id="KW-0648">Protein biosynthesis</keyword>
<keyword id="KW-0694">RNA-binding</keyword>
<keyword id="KW-0820">tRNA-binding</keyword>
<keyword id="KW-0862">Zinc</keyword>
<organism>
    <name type="scientific">Xanthomonas oryzae pv. oryzae (strain MAFF 311018)</name>
    <dbReference type="NCBI Taxonomy" id="342109"/>
    <lineage>
        <taxon>Bacteria</taxon>
        <taxon>Pseudomonadati</taxon>
        <taxon>Pseudomonadota</taxon>
        <taxon>Gammaproteobacteria</taxon>
        <taxon>Lysobacterales</taxon>
        <taxon>Lysobacteraceae</taxon>
        <taxon>Xanthomonas</taxon>
    </lineage>
</organism>
<accession>Q2P4E9</accession>
<proteinExistence type="inferred from homology"/>
<protein>
    <recommendedName>
        <fullName evidence="1">Methionine--tRNA ligase</fullName>
        <ecNumber evidence="1">6.1.1.10</ecNumber>
    </recommendedName>
    <alternativeName>
        <fullName evidence="1">Methionyl-tRNA synthetase</fullName>
        <shortName evidence="1">MetRS</shortName>
    </alternativeName>
</protein>
<gene>
    <name evidence="1" type="primary">metG</name>
    <name type="ordered locus">XOO1823</name>
</gene>
<evidence type="ECO:0000255" key="1">
    <source>
        <dbReference type="HAMAP-Rule" id="MF_00098"/>
    </source>
</evidence>
<evidence type="ECO:0000256" key="2">
    <source>
        <dbReference type="SAM" id="MobiDB-lite"/>
    </source>
</evidence>
<reference key="1">
    <citation type="journal article" date="2005" name="Jpn. Agric. Res. Q.">
        <title>Genome sequence of Xanthomonas oryzae pv. oryzae suggests contribution of large numbers of effector genes and insertion sequences to its race diversity.</title>
        <authorList>
            <person name="Ochiai H."/>
            <person name="Inoue Y."/>
            <person name="Takeya M."/>
            <person name="Sasaki A."/>
            <person name="Kaku H."/>
        </authorList>
    </citation>
    <scope>NUCLEOTIDE SEQUENCE [LARGE SCALE GENOMIC DNA]</scope>
    <source>
        <strain>MAFF 311018</strain>
    </source>
</reference>
<dbReference type="EC" id="6.1.1.10" evidence="1"/>
<dbReference type="EMBL" id="AP008229">
    <property type="protein sequence ID" value="BAE68578.1"/>
    <property type="molecule type" value="Genomic_DNA"/>
</dbReference>
<dbReference type="RefSeq" id="WP_011258663.1">
    <property type="nucleotide sequence ID" value="NC_007705.1"/>
</dbReference>
<dbReference type="SMR" id="Q2P4E9"/>
<dbReference type="KEGG" id="xom:XOO1823"/>
<dbReference type="HOGENOM" id="CLU_009710_7_0_6"/>
<dbReference type="GO" id="GO:0005829">
    <property type="term" value="C:cytosol"/>
    <property type="evidence" value="ECO:0007669"/>
    <property type="project" value="TreeGrafter"/>
</dbReference>
<dbReference type="GO" id="GO:0005524">
    <property type="term" value="F:ATP binding"/>
    <property type="evidence" value="ECO:0007669"/>
    <property type="project" value="UniProtKB-UniRule"/>
</dbReference>
<dbReference type="GO" id="GO:0046872">
    <property type="term" value="F:metal ion binding"/>
    <property type="evidence" value="ECO:0007669"/>
    <property type="project" value="UniProtKB-KW"/>
</dbReference>
<dbReference type="GO" id="GO:0004825">
    <property type="term" value="F:methionine-tRNA ligase activity"/>
    <property type="evidence" value="ECO:0007669"/>
    <property type="project" value="UniProtKB-UniRule"/>
</dbReference>
<dbReference type="GO" id="GO:0000049">
    <property type="term" value="F:tRNA binding"/>
    <property type="evidence" value="ECO:0007669"/>
    <property type="project" value="UniProtKB-KW"/>
</dbReference>
<dbReference type="GO" id="GO:0006431">
    <property type="term" value="P:methionyl-tRNA aminoacylation"/>
    <property type="evidence" value="ECO:0007669"/>
    <property type="project" value="UniProtKB-UniRule"/>
</dbReference>
<dbReference type="CDD" id="cd07957">
    <property type="entry name" value="Anticodon_Ia_Met"/>
    <property type="match status" value="1"/>
</dbReference>
<dbReference type="CDD" id="cd00814">
    <property type="entry name" value="MetRS_core"/>
    <property type="match status" value="1"/>
</dbReference>
<dbReference type="CDD" id="cd02800">
    <property type="entry name" value="tRNA_bind_EcMetRS_like"/>
    <property type="match status" value="1"/>
</dbReference>
<dbReference type="FunFam" id="1.10.730.10:FF:000005">
    <property type="entry name" value="Methionine--tRNA ligase"/>
    <property type="match status" value="1"/>
</dbReference>
<dbReference type="FunFam" id="2.20.28.20:FF:000001">
    <property type="entry name" value="Methionine--tRNA ligase"/>
    <property type="match status" value="1"/>
</dbReference>
<dbReference type="FunFam" id="2.40.50.140:FF:000042">
    <property type="entry name" value="Methionine--tRNA ligase"/>
    <property type="match status" value="1"/>
</dbReference>
<dbReference type="Gene3D" id="3.40.50.620">
    <property type="entry name" value="HUPs"/>
    <property type="match status" value="1"/>
</dbReference>
<dbReference type="Gene3D" id="1.10.730.10">
    <property type="entry name" value="Isoleucyl-tRNA Synthetase, Domain 1"/>
    <property type="match status" value="1"/>
</dbReference>
<dbReference type="Gene3D" id="2.20.28.20">
    <property type="entry name" value="Methionyl-tRNA synthetase, Zn-domain"/>
    <property type="match status" value="1"/>
</dbReference>
<dbReference type="Gene3D" id="2.40.50.140">
    <property type="entry name" value="Nucleic acid-binding proteins"/>
    <property type="match status" value="1"/>
</dbReference>
<dbReference type="HAMAP" id="MF_00098">
    <property type="entry name" value="Met_tRNA_synth_type1"/>
    <property type="match status" value="1"/>
</dbReference>
<dbReference type="InterPro" id="IPR001412">
    <property type="entry name" value="aa-tRNA-synth_I_CS"/>
</dbReference>
<dbReference type="InterPro" id="IPR041872">
    <property type="entry name" value="Anticodon_Met"/>
</dbReference>
<dbReference type="InterPro" id="IPR004495">
    <property type="entry name" value="Met-tRNA-synth_bsu_C"/>
</dbReference>
<dbReference type="InterPro" id="IPR023458">
    <property type="entry name" value="Met-tRNA_ligase_1"/>
</dbReference>
<dbReference type="InterPro" id="IPR014758">
    <property type="entry name" value="Met-tRNA_synth"/>
</dbReference>
<dbReference type="InterPro" id="IPR015413">
    <property type="entry name" value="Methionyl/Leucyl_tRNA_Synth"/>
</dbReference>
<dbReference type="InterPro" id="IPR033911">
    <property type="entry name" value="MetRS_core"/>
</dbReference>
<dbReference type="InterPro" id="IPR029038">
    <property type="entry name" value="MetRS_Zn"/>
</dbReference>
<dbReference type="InterPro" id="IPR012340">
    <property type="entry name" value="NA-bd_OB-fold"/>
</dbReference>
<dbReference type="InterPro" id="IPR014729">
    <property type="entry name" value="Rossmann-like_a/b/a_fold"/>
</dbReference>
<dbReference type="InterPro" id="IPR002547">
    <property type="entry name" value="tRNA-bd_dom"/>
</dbReference>
<dbReference type="InterPro" id="IPR009080">
    <property type="entry name" value="tRNAsynth_Ia_anticodon-bd"/>
</dbReference>
<dbReference type="NCBIfam" id="TIGR00398">
    <property type="entry name" value="metG"/>
    <property type="match status" value="1"/>
</dbReference>
<dbReference type="NCBIfam" id="TIGR00399">
    <property type="entry name" value="metG_C_term"/>
    <property type="match status" value="1"/>
</dbReference>
<dbReference type="NCBIfam" id="NF001100">
    <property type="entry name" value="PRK00133.1"/>
    <property type="match status" value="1"/>
</dbReference>
<dbReference type="PANTHER" id="PTHR45765">
    <property type="entry name" value="METHIONINE--TRNA LIGASE"/>
    <property type="match status" value="1"/>
</dbReference>
<dbReference type="PANTHER" id="PTHR45765:SF1">
    <property type="entry name" value="METHIONINE--TRNA LIGASE, CYTOPLASMIC"/>
    <property type="match status" value="1"/>
</dbReference>
<dbReference type="Pfam" id="PF19303">
    <property type="entry name" value="Anticodon_3"/>
    <property type="match status" value="1"/>
</dbReference>
<dbReference type="Pfam" id="PF09334">
    <property type="entry name" value="tRNA-synt_1g"/>
    <property type="match status" value="1"/>
</dbReference>
<dbReference type="Pfam" id="PF01588">
    <property type="entry name" value="tRNA_bind"/>
    <property type="match status" value="1"/>
</dbReference>
<dbReference type="PRINTS" id="PR01041">
    <property type="entry name" value="TRNASYNTHMET"/>
</dbReference>
<dbReference type="SUPFAM" id="SSF47323">
    <property type="entry name" value="Anticodon-binding domain of a subclass of class I aminoacyl-tRNA synthetases"/>
    <property type="match status" value="1"/>
</dbReference>
<dbReference type="SUPFAM" id="SSF57770">
    <property type="entry name" value="Methionyl-tRNA synthetase (MetRS), Zn-domain"/>
    <property type="match status" value="1"/>
</dbReference>
<dbReference type="SUPFAM" id="SSF50249">
    <property type="entry name" value="Nucleic acid-binding proteins"/>
    <property type="match status" value="1"/>
</dbReference>
<dbReference type="SUPFAM" id="SSF52374">
    <property type="entry name" value="Nucleotidylyl transferase"/>
    <property type="match status" value="1"/>
</dbReference>
<dbReference type="PROSITE" id="PS00178">
    <property type="entry name" value="AA_TRNA_LIGASE_I"/>
    <property type="match status" value="1"/>
</dbReference>
<dbReference type="PROSITE" id="PS50886">
    <property type="entry name" value="TRBD"/>
    <property type="match status" value="1"/>
</dbReference>